<organism>
    <name type="scientific">Oryza sativa subsp. indica</name>
    <name type="common">Rice</name>
    <dbReference type="NCBI Taxonomy" id="39946"/>
    <lineage>
        <taxon>Eukaryota</taxon>
        <taxon>Viridiplantae</taxon>
        <taxon>Streptophyta</taxon>
        <taxon>Embryophyta</taxon>
        <taxon>Tracheophyta</taxon>
        <taxon>Spermatophyta</taxon>
        <taxon>Magnoliopsida</taxon>
        <taxon>Liliopsida</taxon>
        <taxon>Poales</taxon>
        <taxon>Poaceae</taxon>
        <taxon>BOP clade</taxon>
        <taxon>Oryzoideae</taxon>
        <taxon>Oryzeae</taxon>
        <taxon>Oryzinae</taxon>
        <taxon>Oryza</taxon>
        <taxon>Oryza sativa</taxon>
    </lineage>
</organism>
<protein>
    <recommendedName>
        <fullName evidence="1">Large ribosomal subunit protein uL16c</fullName>
    </recommendedName>
    <alternativeName>
        <fullName evidence="2">50S ribosomal protein L16, chloroplastic</fullName>
    </alternativeName>
</protein>
<geneLocation type="chloroplast"/>
<keyword id="KW-0150">Chloroplast</keyword>
<keyword id="KW-0934">Plastid</keyword>
<keyword id="KW-1185">Reference proteome</keyword>
<keyword id="KW-0687">Ribonucleoprotein</keyword>
<keyword id="KW-0689">Ribosomal protein</keyword>
<reference key="1">
    <citation type="journal article" date="2004" name="Plant Physiol.">
        <title>A comparison of rice chloroplast genomes.</title>
        <authorList>
            <person name="Tang J."/>
            <person name="Xia H."/>
            <person name="Cao M."/>
            <person name="Zhang X."/>
            <person name="Zeng W."/>
            <person name="Hu S."/>
            <person name="Tong W."/>
            <person name="Wang J."/>
            <person name="Wang J."/>
            <person name="Yu J."/>
            <person name="Yang H."/>
            <person name="Zhu L."/>
        </authorList>
    </citation>
    <scope>NUCLEOTIDE SEQUENCE [LARGE SCALE GENOMIC DNA]</scope>
    <source>
        <strain>cv. 93-11</strain>
    </source>
</reference>
<proteinExistence type="inferred from homology"/>
<sequence>MLSPKRTRFRKQHRGRMKGKSYRGNCICFGRYALQALEPTWITARQIEAGRRAMTRYARRGGKIWVRIFPDKPVTIRPTETRMGSGKGSPEYWVAVVKPGRILYEMGGVSETVARVAISIAASKMPIRSQFLRLEI</sequence>
<accession>P0C442</accession>
<accession>P12138</accession>
<accession>Q6QXS2</accession>
<accession>Q6QY48</accession>
<name>RK16_ORYSI</name>
<gene>
    <name evidence="1" type="primary">rpl16</name>
    <name type="ORF">9311108</name>
</gene>
<comment type="subunit">
    <text evidence="1">Part of the 50S ribosomal subunit.</text>
</comment>
<comment type="subcellular location">
    <subcellularLocation>
        <location>Plastid</location>
        <location>Chloroplast</location>
    </subcellularLocation>
</comment>
<comment type="similarity">
    <text evidence="1">Belongs to the universal ribosomal protein uL16 family.</text>
</comment>
<comment type="sequence caution" evidence="2">
    <conflict type="erroneous gene model prediction">
        <sequence resource="EMBL-CDS" id="AAS46081"/>
    </conflict>
</comment>
<dbReference type="EMBL" id="AY522329">
    <property type="protein sequence ID" value="AAS46081.1"/>
    <property type="status" value="ALT_SEQ"/>
    <property type="molecule type" value="Genomic_DNA"/>
</dbReference>
<dbReference type="RefSeq" id="YP_654241.2">
    <property type="nucleotide sequence ID" value="NC_008155.1"/>
</dbReference>
<dbReference type="SMR" id="P0C442"/>
<dbReference type="STRING" id="39946.P0C442"/>
<dbReference type="GeneID" id="4126899"/>
<dbReference type="Proteomes" id="UP000007015">
    <property type="component" value="Chloroplast"/>
</dbReference>
<dbReference type="GO" id="GO:0009507">
    <property type="term" value="C:chloroplast"/>
    <property type="evidence" value="ECO:0007669"/>
    <property type="project" value="UniProtKB-SubCell"/>
</dbReference>
<dbReference type="GO" id="GO:0005762">
    <property type="term" value="C:mitochondrial large ribosomal subunit"/>
    <property type="evidence" value="ECO:0007669"/>
    <property type="project" value="TreeGrafter"/>
</dbReference>
<dbReference type="GO" id="GO:0009536">
    <property type="term" value="C:plastid"/>
    <property type="evidence" value="ECO:0000305"/>
    <property type="project" value="Gramene"/>
</dbReference>
<dbReference type="GO" id="GO:0019843">
    <property type="term" value="F:rRNA binding"/>
    <property type="evidence" value="ECO:0007669"/>
    <property type="project" value="InterPro"/>
</dbReference>
<dbReference type="GO" id="GO:0003735">
    <property type="term" value="F:structural constituent of ribosome"/>
    <property type="evidence" value="ECO:0007669"/>
    <property type="project" value="InterPro"/>
</dbReference>
<dbReference type="GO" id="GO:0032543">
    <property type="term" value="P:mitochondrial translation"/>
    <property type="evidence" value="ECO:0007669"/>
    <property type="project" value="TreeGrafter"/>
</dbReference>
<dbReference type="CDD" id="cd01433">
    <property type="entry name" value="Ribosomal_L16_L10e"/>
    <property type="match status" value="1"/>
</dbReference>
<dbReference type="FunFam" id="3.90.1170.10:FF:000001">
    <property type="entry name" value="50S ribosomal protein L16"/>
    <property type="match status" value="1"/>
</dbReference>
<dbReference type="Gene3D" id="3.90.1170.10">
    <property type="entry name" value="Ribosomal protein L10e/L16"/>
    <property type="match status" value="1"/>
</dbReference>
<dbReference type="HAMAP" id="MF_01342">
    <property type="entry name" value="Ribosomal_uL16"/>
    <property type="match status" value="1"/>
</dbReference>
<dbReference type="InterPro" id="IPR047873">
    <property type="entry name" value="Ribosomal_uL16"/>
</dbReference>
<dbReference type="InterPro" id="IPR000114">
    <property type="entry name" value="Ribosomal_uL16_bact-type"/>
</dbReference>
<dbReference type="InterPro" id="IPR020798">
    <property type="entry name" value="Ribosomal_uL16_CS"/>
</dbReference>
<dbReference type="InterPro" id="IPR016180">
    <property type="entry name" value="Ribosomal_uL16_dom"/>
</dbReference>
<dbReference type="InterPro" id="IPR036920">
    <property type="entry name" value="Ribosomal_uL16_sf"/>
</dbReference>
<dbReference type="NCBIfam" id="TIGR01164">
    <property type="entry name" value="rplP_bact"/>
    <property type="match status" value="1"/>
</dbReference>
<dbReference type="PANTHER" id="PTHR12220">
    <property type="entry name" value="50S/60S RIBOSOMAL PROTEIN L16"/>
    <property type="match status" value="1"/>
</dbReference>
<dbReference type="PANTHER" id="PTHR12220:SF13">
    <property type="entry name" value="LARGE RIBOSOMAL SUBUNIT PROTEIN UL16M"/>
    <property type="match status" value="1"/>
</dbReference>
<dbReference type="Pfam" id="PF00252">
    <property type="entry name" value="Ribosomal_L16"/>
    <property type="match status" value="1"/>
</dbReference>
<dbReference type="PRINTS" id="PR00060">
    <property type="entry name" value="RIBOSOMALL16"/>
</dbReference>
<dbReference type="SUPFAM" id="SSF54686">
    <property type="entry name" value="Ribosomal protein L16p/L10e"/>
    <property type="match status" value="1"/>
</dbReference>
<dbReference type="PROSITE" id="PS00586">
    <property type="entry name" value="RIBOSOMAL_L16_1"/>
    <property type="match status" value="1"/>
</dbReference>
<dbReference type="PROSITE" id="PS00701">
    <property type="entry name" value="RIBOSOMAL_L16_2"/>
    <property type="match status" value="1"/>
</dbReference>
<feature type="chain" id="PRO_0000290043" description="Large ribosomal subunit protein uL16c">
    <location>
        <begin position="1"/>
        <end position="136"/>
    </location>
</feature>
<evidence type="ECO:0000255" key="1">
    <source>
        <dbReference type="HAMAP-Rule" id="MF_01342"/>
    </source>
</evidence>
<evidence type="ECO:0000305" key="2"/>